<accession>Q88LD9</accession>
<protein>
    <recommendedName>
        <fullName evidence="1">Acetyl-coenzyme A carboxylase carboxyl transferase subunit beta</fullName>
        <shortName evidence="1">ACCase subunit beta</shortName>
        <shortName evidence="1">Acetyl-CoA carboxylase carboxyltransferase subunit beta</shortName>
        <ecNumber evidence="1">2.1.3.15</ecNumber>
    </recommendedName>
</protein>
<proteinExistence type="inferred from homology"/>
<name>ACCD_PSEPK</name>
<dbReference type="EC" id="2.1.3.15" evidence="1"/>
<dbReference type="EMBL" id="AE015451">
    <property type="protein sequence ID" value="AAN67610.1"/>
    <property type="molecule type" value="Genomic_DNA"/>
</dbReference>
<dbReference type="RefSeq" id="NP_744146.1">
    <property type="nucleotide sequence ID" value="NC_002947.4"/>
</dbReference>
<dbReference type="RefSeq" id="WP_004574892.1">
    <property type="nucleotide sequence ID" value="NZ_CP169744.1"/>
</dbReference>
<dbReference type="SMR" id="Q88LD9"/>
<dbReference type="STRING" id="160488.PP_1996"/>
<dbReference type="PaxDb" id="160488-PP_1996"/>
<dbReference type="GeneID" id="83681499"/>
<dbReference type="KEGG" id="ppu:PP_1996"/>
<dbReference type="PATRIC" id="fig|160488.4.peg.2104"/>
<dbReference type="eggNOG" id="COG0777">
    <property type="taxonomic scope" value="Bacteria"/>
</dbReference>
<dbReference type="HOGENOM" id="CLU_015486_1_0_6"/>
<dbReference type="OrthoDB" id="9772975at2"/>
<dbReference type="PhylomeDB" id="Q88LD9"/>
<dbReference type="BioCyc" id="PPUT160488:G1G01-2126-MONOMER"/>
<dbReference type="UniPathway" id="UPA00655">
    <property type="reaction ID" value="UER00711"/>
</dbReference>
<dbReference type="Proteomes" id="UP000000556">
    <property type="component" value="Chromosome"/>
</dbReference>
<dbReference type="GO" id="GO:0009329">
    <property type="term" value="C:acetate CoA-transferase complex"/>
    <property type="evidence" value="ECO:0007669"/>
    <property type="project" value="TreeGrafter"/>
</dbReference>
<dbReference type="GO" id="GO:0003989">
    <property type="term" value="F:acetyl-CoA carboxylase activity"/>
    <property type="evidence" value="ECO:0007669"/>
    <property type="project" value="InterPro"/>
</dbReference>
<dbReference type="GO" id="GO:0005524">
    <property type="term" value="F:ATP binding"/>
    <property type="evidence" value="ECO:0007669"/>
    <property type="project" value="UniProtKB-KW"/>
</dbReference>
<dbReference type="GO" id="GO:0016743">
    <property type="term" value="F:carboxyl- or carbamoyltransferase activity"/>
    <property type="evidence" value="ECO:0007669"/>
    <property type="project" value="UniProtKB-UniRule"/>
</dbReference>
<dbReference type="GO" id="GO:0008270">
    <property type="term" value="F:zinc ion binding"/>
    <property type="evidence" value="ECO:0007669"/>
    <property type="project" value="UniProtKB-UniRule"/>
</dbReference>
<dbReference type="GO" id="GO:0006633">
    <property type="term" value="P:fatty acid biosynthetic process"/>
    <property type="evidence" value="ECO:0007669"/>
    <property type="project" value="UniProtKB-KW"/>
</dbReference>
<dbReference type="GO" id="GO:2001295">
    <property type="term" value="P:malonyl-CoA biosynthetic process"/>
    <property type="evidence" value="ECO:0007669"/>
    <property type="project" value="UniProtKB-UniRule"/>
</dbReference>
<dbReference type="Gene3D" id="3.90.226.10">
    <property type="entry name" value="2-enoyl-CoA Hydratase, Chain A, domain 1"/>
    <property type="match status" value="1"/>
</dbReference>
<dbReference type="HAMAP" id="MF_01395">
    <property type="entry name" value="AcetylCoA_CT_beta"/>
    <property type="match status" value="1"/>
</dbReference>
<dbReference type="InterPro" id="IPR034733">
    <property type="entry name" value="AcCoA_carboxyl_beta"/>
</dbReference>
<dbReference type="InterPro" id="IPR000438">
    <property type="entry name" value="Acetyl_CoA_COase_Trfase_b_su"/>
</dbReference>
<dbReference type="InterPro" id="IPR029045">
    <property type="entry name" value="ClpP/crotonase-like_dom_sf"/>
</dbReference>
<dbReference type="InterPro" id="IPR011762">
    <property type="entry name" value="COA_CT_N"/>
</dbReference>
<dbReference type="InterPro" id="IPR041010">
    <property type="entry name" value="Znf-ACC"/>
</dbReference>
<dbReference type="NCBIfam" id="TIGR00515">
    <property type="entry name" value="accD"/>
    <property type="match status" value="1"/>
</dbReference>
<dbReference type="PANTHER" id="PTHR42995">
    <property type="entry name" value="ACETYL-COENZYME A CARBOXYLASE CARBOXYL TRANSFERASE SUBUNIT BETA, CHLOROPLASTIC"/>
    <property type="match status" value="1"/>
</dbReference>
<dbReference type="PANTHER" id="PTHR42995:SF5">
    <property type="entry name" value="ACETYL-COENZYME A CARBOXYLASE CARBOXYL TRANSFERASE SUBUNIT BETA, CHLOROPLASTIC"/>
    <property type="match status" value="1"/>
</dbReference>
<dbReference type="Pfam" id="PF01039">
    <property type="entry name" value="Carboxyl_trans"/>
    <property type="match status" value="1"/>
</dbReference>
<dbReference type="Pfam" id="PF17848">
    <property type="entry name" value="Zn_ribbon_ACC"/>
    <property type="match status" value="1"/>
</dbReference>
<dbReference type="PRINTS" id="PR01070">
    <property type="entry name" value="ACCCTRFRASEB"/>
</dbReference>
<dbReference type="SUPFAM" id="SSF52096">
    <property type="entry name" value="ClpP/crotonase"/>
    <property type="match status" value="1"/>
</dbReference>
<dbReference type="PROSITE" id="PS50980">
    <property type="entry name" value="COA_CT_NTER"/>
    <property type="match status" value="1"/>
</dbReference>
<feature type="chain" id="PRO_0000359042" description="Acetyl-coenzyme A carboxylase carboxyl transferase subunit beta">
    <location>
        <begin position="1"/>
        <end position="297"/>
    </location>
</feature>
<feature type="domain" description="CoA carboxyltransferase N-terminal" evidence="2">
    <location>
        <begin position="27"/>
        <end position="296"/>
    </location>
</feature>
<feature type="zinc finger region" description="C4-type" evidence="1">
    <location>
        <begin position="31"/>
        <end position="53"/>
    </location>
</feature>
<feature type="binding site" evidence="1">
    <location>
        <position position="31"/>
    </location>
    <ligand>
        <name>Zn(2+)</name>
        <dbReference type="ChEBI" id="CHEBI:29105"/>
    </ligand>
</feature>
<feature type="binding site" evidence="1">
    <location>
        <position position="34"/>
    </location>
    <ligand>
        <name>Zn(2+)</name>
        <dbReference type="ChEBI" id="CHEBI:29105"/>
    </ligand>
</feature>
<feature type="binding site" evidence="1">
    <location>
        <position position="50"/>
    </location>
    <ligand>
        <name>Zn(2+)</name>
        <dbReference type="ChEBI" id="CHEBI:29105"/>
    </ligand>
</feature>
<feature type="binding site" evidence="1">
    <location>
        <position position="53"/>
    </location>
    <ligand>
        <name>Zn(2+)</name>
        <dbReference type="ChEBI" id="CHEBI:29105"/>
    </ligand>
</feature>
<sequence length="297" mass="32510">MSNWLVDKLIPSIMRSEVKKSSVPEGLWHKCPSCEAVLYRPELEKTLDVCPKCNHHMRIGARARIDIFLDAEGRAELGADLEPVDRLKFRDGKKYKDRLTAAQKQTGEKDALISMSGTLMGMPIVVSAFEFSFMGGSMGAIVGERFVRAANYALENRCPMVCFSASGGARMQEALISLMQMAKTSAVLARLREEGIPFISVLTDPVYGGVSASLAMLGDVIVGEPKALIGFAGPRVIEQTVREKLPEGFQRSEFLLEHGAIDLIISRGELRPRLARLLAQMTGQQTPEEAREAAAVA</sequence>
<comment type="function">
    <text evidence="1">Component of the acetyl coenzyme A carboxylase (ACC) complex. Biotin carboxylase (BC) catalyzes the carboxylation of biotin on its carrier protein (BCCP) and then the CO(2) group is transferred by the transcarboxylase to acetyl-CoA to form malonyl-CoA.</text>
</comment>
<comment type="catalytic activity">
    <reaction evidence="1">
        <text>N(6)-carboxybiotinyl-L-lysyl-[protein] + acetyl-CoA = N(6)-biotinyl-L-lysyl-[protein] + malonyl-CoA</text>
        <dbReference type="Rhea" id="RHEA:54728"/>
        <dbReference type="Rhea" id="RHEA-COMP:10505"/>
        <dbReference type="Rhea" id="RHEA-COMP:10506"/>
        <dbReference type="ChEBI" id="CHEBI:57288"/>
        <dbReference type="ChEBI" id="CHEBI:57384"/>
        <dbReference type="ChEBI" id="CHEBI:83144"/>
        <dbReference type="ChEBI" id="CHEBI:83145"/>
        <dbReference type="EC" id="2.1.3.15"/>
    </reaction>
</comment>
<comment type="cofactor">
    <cofactor evidence="1">
        <name>Zn(2+)</name>
        <dbReference type="ChEBI" id="CHEBI:29105"/>
    </cofactor>
    <text evidence="1">Binds 1 zinc ion per subunit.</text>
</comment>
<comment type="pathway">
    <text evidence="1">Lipid metabolism; malonyl-CoA biosynthesis; malonyl-CoA from acetyl-CoA: step 1/1.</text>
</comment>
<comment type="subunit">
    <text evidence="1">Acetyl-CoA carboxylase is a heterohexamer composed of biotin carboxyl carrier protein (AccB), biotin carboxylase (AccC) and two subunits each of ACCase subunit alpha (AccA) and ACCase subunit beta (AccD).</text>
</comment>
<comment type="subcellular location">
    <subcellularLocation>
        <location evidence="1">Cytoplasm</location>
    </subcellularLocation>
</comment>
<comment type="similarity">
    <text evidence="1">Belongs to the AccD/PCCB family.</text>
</comment>
<gene>
    <name evidence="1" type="primary">accD</name>
    <name type="ordered locus">PP_1996</name>
</gene>
<keyword id="KW-0067">ATP-binding</keyword>
<keyword id="KW-0963">Cytoplasm</keyword>
<keyword id="KW-0275">Fatty acid biosynthesis</keyword>
<keyword id="KW-0276">Fatty acid metabolism</keyword>
<keyword id="KW-0444">Lipid biosynthesis</keyword>
<keyword id="KW-0443">Lipid metabolism</keyword>
<keyword id="KW-0479">Metal-binding</keyword>
<keyword id="KW-0547">Nucleotide-binding</keyword>
<keyword id="KW-1185">Reference proteome</keyword>
<keyword id="KW-0808">Transferase</keyword>
<keyword id="KW-0862">Zinc</keyword>
<keyword id="KW-0863">Zinc-finger</keyword>
<evidence type="ECO:0000255" key="1">
    <source>
        <dbReference type="HAMAP-Rule" id="MF_01395"/>
    </source>
</evidence>
<evidence type="ECO:0000255" key="2">
    <source>
        <dbReference type="PROSITE-ProRule" id="PRU01136"/>
    </source>
</evidence>
<reference key="1">
    <citation type="journal article" date="2002" name="Environ. Microbiol.">
        <title>Complete genome sequence and comparative analysis of the metabolically versatile Pseudomonas putida KT2440.</title>
        <authorList>
            <person name="Nelson K.E."/>
            <person name="Weinel C."/>
            <person name="Paulsen I.T."/>
            <person name="Dodson R.J."/>
            <person name="Hilbert H."/>
            <person name="Martins dos Santos V.A.P."/>
            <person name="Fouts D.E."/>
            <person name="Gill S.R."/>
            <person name="Pop M."/>
            <person name="Holmes M."/>
            <person name="Brinkac L.M."/>
            <person name="Beanan M.J."/>
            <person name="DeBoy R.T."/>
            <person name="Daugherty S.C."/>
            <person name="Kolonay J.F."/>
            <person name="Madupu R."/>
            <person name="Nelson W.C."/>
            <person name="White O."/>
            <person name="Peterson J.D."/>
            <person name="Khouri H.M."/>
            <person name="Hance I."/>
            <person name="Chris Lee P."/>
            <person name="Holtzapple E.K."/>
            <person name="Scanlan D."/>
            <person name="Tran K."/>
            <person name="Moazzez A."/>
            <person name="Utterback T.R."/>
            <person name="Rizzo M."/>
            <person name="Lee K."/>
            <person name="Kosack D."/>
            <person name="Moestl D."/>
            <person name="Wedler H."/>
            <person name="Lauber J."/>
            <person name="Stjepandic D."/>
            <person name="Hoheisel J."/>
            <person name="Straetz M."/>
            <person name="Heim S."/>
            <person name="Kiewitz C."/>
            <person name="Eisen J.A."/>
            <person name="Timmis K.N."/>
            <person name="Duesterhoeft A."/>
            <person name="Tuemmler B."/>
            <person name="Fraser C.M."/>
        </authorList>
    </citation>
    <scope>NUCLEOTIDE SEQUENCE [LARGE SCALE GENOMIC DNA]</scope>
    <source>
        <strain>ATCC 47054 / DSM 6125 / CFBP 8728 / NCIMB 11950 / KT2440</strain>
    </source>
</reference>
<organism>
    <name type="scientific">Pseudomonas putida (strain ATCC 47054 / DSM 6125 / CFBP 8728 / NCIMB 11950 / KT2440)</name>
    <dbReference type="NCBI Taxonomy" id="160488"/>
    <lineage>
        <taxon>Bacteria</taxon>
        <taxon>Pseudomonadati</taxon>
        <taxon>Pseudomonadota</taxon>
        <taxon>Gammaproteobacteria</taxon>
        <taxon>Pseudomonadales</taxon>
        <taxon>Pseudomonadaceae</taxon>
        <taxon>Pseudomonas</taxon>
    </lineage>
</organism>